<keyword id="KW-0002">3D-structure</keyword>
<keyword id="KW-0058">Aromatic hydrocarbons catabolism</keyword>
<keyword id="KW-0274">FAD</keyword>
<keyword id="KW-0285">Flavoprotein</keyword>
<keyword id="KW-0503">Monooxygenase</keyword>
<keyword id="KW-0560">Oxidoreductase</keyword>
<gene>
    <name evidence="6" type="primary">tcpA</name>
    <name evidence="10" type="ordered locus">Reut_A1585</name>
</gene>
<name>TCPA_CUPPJ</name>
<comment type="function">
    <text evidence="1 2 3 4">Involved in the degradation of 2,4,6-trichlorophenol (2,4,6-TCP) (PubMed:12057943, PubMed:14660355, PubMed:14662756, PubMed:17322325). Catalyzes the conversion of 2,4,6-TCP to 6-chlorohydroxyquinol (6-CHQ) (PubMed:12057943, PubMed:14662756). The monooxygenase oxidizes 2,4,6-TCP to 2,6-dichloroquinone (2,6-DCBQ), which remains with the enzyme and is hydrolyzed to 2-chlorohydroxyquinone (PubMed:14662756). 2-chlorohydroxyquinone is chemically reduced by ascorbate and NADH to 6-chlorohydroxyquinol (6-CHQ) (PubMed:14662756).</text>
</comment>
<comment type="catalytic activity">
    <reaction evidence="3 9">
        <text>2,4,6-trichlorophenol + FADH2 + O2 = 2-chloro-6-hydroxy-1,4-benzoquinone + FAD + 2 chloride + 3 H(+)</text>
        <dbReference type="Rhea" id="RHEA:73231"/>
        <dbReference type="ChEBI" id="CHEBI:15378"/>
        <dbReference type="ChEBI" id="CHEBI:15379"/>
        <dbReference type="ChEBI" id="CHEBI:17996"/>
        <dbReference type="ChEBI" id="CHEBI:57692"/>
        <dbReference type="ChEBI" id="CHEBI:58307"/>
        <dbReference type="ChEBI" id="CHEBI:140426"/>
        <dbReference type="ChEBI" id="CHEBI:147300"/>
        <dbReference type="EC" id="1.14.14.173"/>
    </reaction>
    <physiologicalReaction direction="left-to-right" evidence="3 9">
        <dbReference type="Rhea" id="RHEA:73232"/>
    </physiologicalReaction>
</comment>
<comment type="catalytic activity">
    <reaction evidence="3">
        <text>2,4,6-trichlorophenol + FADH2 + O2 = 2,6-dichlorobenzoquinone + FAD + chloride + H2O + H(+)</text>
        <dbReference type="Rhea" id="RHEA:63412"/>
        <dbReference type="ChEBI" id="CHEBI:15377"/>
        <dbReference type="ChEBI" id="CHEBI:15378"/>
        <dbReference type="ChEBI" id="CHEBI:15379"/>
        <dbReference type="ChEBI" id="CHEBI:17996"/>
        <dbReference type="ChEBI" id="CHEBI:57692"/>
        <dbReference type="ChEBI" id="CHEBI:58307"/>
        <dbReference type="ChEBI" id="CHEBI:140426"/>
        <dbReference type="ChEBI" id="CHEBI:147298"/>
    </reaction>
    <physiologicalReaction direction="left-to-right" evidence="3">
        <dbReference type="Rhea" id="RHEA:63413"/>
    </physiologicalReaction>
</comment>
<comment type="catalytic activity">
    <reaction evidence="3">
        <text>2,6-dichlorobenzoquinone + H2O = 2-chloro-6-hydroxy-1,4-benzoquinone + chloride + 2 H(+)</text>
        <dbReference type="Rhea" id="RHEA:73235"/>
        <dbReference type="ChEBI" id="CHEBI:15377"/>
        <dbReference type="ChEBI" id="CHEBI:15378"/>
        <dbReference type="ChEBI" id="CHEBI:17996"/>
        <dbReference type="ChEBI" id="CHEBI:147298"/>
        <dbReference type="ChEBI" id="CHEBI:147300"/>
    </reaction>
    <physiologicalReaction direction="left-to-right" evidence="3">
        <dbReference type="Rhea" id="RHEA:73236"/>
    </physiologicalReaction>
</comment>
<comment type="biophysicochemical properties">
    <temperatureDependence>
        <text evidence="1">Optimum temperature is 33 degrees Celsius.</text>
    </temperatureDependence>
</comment>
<comment type="pathway">
    <text evidence="8">Aromatic compound metabolism.</text>
</comment>
<comment type="pathway">
    <text evidence="8">Xenobiotic degradation.</text>
</comment>
<comment type="subunit">
    <text evidence="5">Homotetramer in solution.</text>
</comment>
<comment type="induction">
    <text evidence="1">Induced by 2,4,6-TCP and subject to catabolic repression by glutamate.</text>
</comment>
<comment type="disruption phenotype">
    <text evidence="1 4">Disruption mutant cannot degrade 2,4,6-TCP (PubMed:12057943, PubMed:17322325). Inactivation completely prevents removal of the chlorophenol (PubMed:17322325).</text>
</comment>
<comment type="similarity">
    <text evidence="8">Belongs to the FADH(2)-utilizing monooxygenase family.</text>
</comment>
<organism>
    <name type="scientific">Cupriavidus pinatubonensis (strain JMP 134 / LMG 1197)</name>
    <name type="common">Cupriavidus necator (strain JMP 134)</name>
    <dbReference type="NCBI Taxonomy" id="264198"/>
    <lineage>
        <taxon>Bacteria</taxon>
        <taxon>Pseudomonadati</taxon>
        <taxon>Pseudomonadota</taxon>
        <taxon>Betaproteobacteria</taxon>
        <taxon>Burkholderiales</taxon>
        <taxon>Burkholderiaceae</taxon>
        <taxon>Cupriavidus</taxon>
    </lineage>
</organism>
<evidence type="ECO:0000269" key="1">
    <source>
    </source>
</evidence>
<evidence type="ECO:0000269" key="2">
    <source>
    </source>
</evidence>
<evidence type="ECO:0000269" key="3">
    <source>
    </source>
</evidence>
<evidence type="ECO:0000269" key="4">
    <source>
    </source>
</evidence>
<evidence type="ECO:0000269" key="5">
    <source>
    </source>
</evidence>
<evidence type="ECO:0000303" key="6">
    <source>
    </source>
</evidence>
<evidence type="ECO:0000303" key="7">
    <source>
    </source>
</evidence>
<evidence type="ECO:0000305" key="8"/>
<evidence type="ECO:0000305" key="9">
    <source>
    </source>
</evidence>
<evidence type="ECO:0000312" key="10">
    <source>
        <dbReference type="EMBL" id="AAZ60951.1"/>
    </source>
</evidence>
<evidence type="ECO:0007744" key="11">
    <source>
        <dbReference type="PDB" id="4G5E"/>
    </source>
</evidence>
<evidence type="ECO:0007829" key="12">
    <source>
        <dbReference type="PDB" id="4G5E"/>
    </source>
</evidence>
<accession>Q471I2</accession>
<accession>Q8KTD8</accession>
<reference key="1">
    <citation type="journal article" date="2002" name="J. Bacteriol.">
        <title>Genetic and biochemical characterization of a 2,4,6-trichlorophenol degradation pathway in Ralstonia eutropha JMP134.</title>
        <authorList>
            <person name="Louie T.M."/>
            <person name="Webster C.M."/>
            <person name="Xun L."/>
        </authorList>
    </citation>
    <scope>NUCLEOTIDE SEQUENCE [GENOMIC DNA]</scope>
    <scope>FUNCTION</scope>
    <scope>BIOPHYSICOCHEMICAL PROPERTIES</scope>
    <scope>INDUCTION</scope>
    <scope>DISRUPTION PHENOTYPE</scope>
    <source>
        <strain>JMP134 / LMG 1197</strain>
    </source>
</reference>
<reference key="2">
    <citation type="journal article" date="2010" name="PLoS ONE">
        <title>The complete multipartite genome sequence of Cupriavidus necator JMP134, a versatile pollutant degrader.</title>
        <authorList>
            <person name="Lykidis A."/>
            <person name="Perez-Pantoja D."/>
            <person name="Ledger T."/>
            <person name="Mavromatis K."/>
            <person name="Anderson I.J."/>
            <person name="Ivanova N.N."/>
            <person name="Hooper S.D."/>
            <person name="Lapidus A."/>
            <person name="Lucas S."/>
            <person name="Gonzalez B."/>
            <person name="Kyrpides N.C."/>
        </authorList>
    </citation>
    <scope>NUCLEOTIDE SEQUENCE [LARGE SCALE GENOMIC DNA]</scope>
    <source>
        <strain>JMP134 / LMG 1197</strain>
    </source>
</reference>
<reference key="3">
    <citation type="journal article" date="2003" name="Appl. Environ. Microbiol.">
        <title>Efficient degradation of 2,4,6-Trichlorophenol requires a set of catabolic genes related to tcp genes from Ralstonia eutropha JMP134(pJP4).</title>
        <authorList>
            <person name="Matus V."/>
            <person name="Sanchez M.A."/>
            <person name="Martinez M."/>
            <person name="Gonzalez B."/>
        </authorList>
    </citation>
    <scope>FUNCTION</scope>
    <scope>GENE CLUSTER</scope>
    <source>
        <strain>JMP134 / LMG 1197</strain>
    </source>
</reference>
<reference key="4">
    <citation type="journal article" date="2004" name="J. Biol. Chem.">
        <title>A monooxygenase catalyzes sequential dechlorinations of 2,4,6-trichlorophenol by oxidative and hydrolytic reactions.</title>
        <authorList>
            <person name="Xun L."/>
            <person name="Webster C.M."/>
        </authorList>
    </citation>
    <scope>FUNCTION</scope>
    <scope>CATALYTIC ACTIVITY</scope>
    <source>
        <strain>JMP134 / LMG 1197</strain>
    </source>
</reference>
<reference key="5">
    <citation type="journal article" date="2007" name="Appl. Environ. Microbiol.">
        <title>Genetic characterization of 2,4,6-trichlorophenol degradation in Cupriavidus necator JMP134.</title>
        <authorList>
            <person name="Sanchez M.A."/>
            <person name="Gonzalez B."/>
        </authorList>
    </citation>
    <scope>FUNCTION</scope>
    <scope>DISRUPTION PHENOTYPE</scope>
    <source>
        <strain>JMP134 / LMG 1197</strain>
    </source>
</reference>
<reference evidence="11" key="6">
    <citation type="journal article" date="2012" name="Int. J. Mol. Sci.">
        <title>Structural and catalytic differences between two FADH(2)-dependent monooxygenases: 2,4,5-TCP 4-monooxygenase (TftD) from Burkholderia cepacia AC1100 and 2,4,6-TCP 4-monooxygenase (TcpA) from Cupriavidus necator JMP134.</title>
        <authorList>
            <person name="Hayes R.P."/>
            <person name="Webb B.N."/>
            <person name="Subramanian A.K."/>
            <person name="Nissen M."/>
            <person name="Popchock A."/>
            <person name="Xun L."/>
            <person name="Kang C."/>
        </authorList>
    </citation>
    <scope>X-RAY CRYSTALLOGRAPHY (2.50 ANGSTROMS)</scope>
    <scope>PROPOSED REACTION MECHANISM</scope>
    <scope>SUBUNIT</scope>
    <source>
        <strain>JMP134 / LMG 1197</strain>
    </source>
</reference>
<protein>
    <recommendedName>
        <fullName evidence="8">2,4,6-trichlorophenol monooxygenase</fullName>
        <shortName evidence="6">2,4,6-TCP monooxygenase</shortName>
        <shortName evidence="7">TCP-MO</shortName>
        <ecNumber evidence="3 9">1.14.14.173</ecNumber>
    </recommendedName>
    <alternativeName>
        <fullName evidence="6">FADH(2)-utilizing monooxygenase TcpA</fullName>
    </alternativeName>
</protein>
<sequence length="517" mass="58470">MIRTGKQYLESLNDGRNVWVGNEKIDNVATHPKTRDYAQRHADFYDLHHRPDLQDVMTFVDKDGERRTMQWFGHYDKEQLRRKRKYHETIMREMAGASFPRTPDVNNYVLQTYIDDPSPWETQTIGAEGKVKAKNIVDFVNFAKKHDLNCAPQFVDPQMDRSNPDAQQRSPGLRVIEKNDKGIVVSGVKAIGTGVAFADWIHIGVFFRPGIPGDQIIFAATPVNTPGVTIVCRESVVKEDPIEHPLASQGDELDGMTVFDNVFIPWSHVFHLGNPEHAKLYPQRVFDWLHYHALIRQSVRAELMAGLAILITEHIGTNKIPAVQTRVAKLIGFHQAMLAHIVASEELGFHTPGGAYKPNILIYDFGRALYLENFSQMIYELVDLSGRSALIFASEDQWNDEALNGWFERMNNGPVGQPHDRVKIGRVIRDLFLTDWGNRLFVFENFNGTPLQAIRMLTMQRAEFSAAGPYGTLARKVCGIELTEGHDSEYKATAGYAQALDSARHQEKLALSGTMTV</sequence>
<feature type="chain" id="PRO_0000456791" description="2,4,6-trichlorophenol monooxygenase">
    <location>
        <begin position="1"/>
        <end position="517"/>
    </location>
</feature>
<feature type="helix" evidence="12">
    <location>
        <begin position="5"/>
        <end position="12"/>
    </location>
</feature>
<feature type="strand" evidence="12">
    <location>
        <begin position="18"/>
        <end position="20"/>
    </location>
</feature>
<feature type="turn" evidence="12">
    <location>
        <begin position="28"/>
        <end position="30"/>
    </location>
</feature>
<feature type="turn" evidence="12">
    <location>
        <begin position="32"/>
        <end position="34"/>
    </location>
</feature>
<feature type="helix" evidence="12">
    <location>
        <begin position="35"/>
        <end position="47"/>
    </location>
</feature>
<feature type="helix" evidence="12">
    <location>
        <begin position="51"/>
        <end position="53"/>
    </location>
</feature>
<feature type="helix" evidence="12">
    <location>
        <begin position="54"/>
        <end position="57"/>
    </location>
</feature>
<feature type="strand" evidence="12">
    <location>
        <begin position="58"/>
        <end position="60"/>
    </location>
</feature>
<feature type="strand" evidence="12">
    <location>
        <begin position="66"/>
        <end position="68"/>
    </location>
</feature>
<feature type="helix" evidence="12">
    <location>
        <begin position="69"/>
        <end position="71"/>
    </location>
</feature>
<feature type="helix" evidence="12">
    <location>
        <begin position="77"/>
        <end position="93"/>
    </location>
</feature>
<feature type="turn" evidence="12">
    <location>
        <begin position="94"/>
        <end position="98"/>
    </location>
</feature>
<feature type="helix" evidence="12">
    <location>
        <begin position="103"/>
        <end position="108"/>
    </location>
</feature>
<feature type="helix" evidence="12">
    <location>
        <begin position="111"/>
        <end position="115"/>
    </location>
</feature>
<feature type="helix" evidence="12">
    <location>
        <begin position="118"/>
        <end position="122"/>
    </location>
</feature>
<feature type="helix" evidence="12">
    <location>
        <begin position="133"/>
        <end position="146"/>
    </location>
</feature>
<feature type="strand" evidence="12">
    <location>
        <begin position="150"/>
        <end position="153"/>
    </location>
</feature>
<feature type="strand" evidence="12">
    <location>
        <begin position="174"/>
        <end position="178"/>
    </location>
</feature>
<feature type="strand" evidence="12">
    <location>
        <begin position="180"/>
        <end position="194"/>
    </location>
</feature>
<feature type="helix" evidence="12">
    <location>
        <begin position="195"/>
        <end position="197"/>
    </location>
</feature>
<feature type="strand" evidence="12">
    <location>
        <begin position="199"/>
        <end position="203"/>
    </location>
</feature>
<feature type="helix" evidence="12">
    <location>
        <begin position="213"/>
        <end position="215"/>
    </location>
</feature>
<feature type="strand" evidence="12">
    <location>
        <begin position="217"/>
        <end position="222"/>
    </location>
</feature>
<feature type="strand" evidence="12">
    <location>
        <begin position="228"/>
        <end position="232"/>
    </location>
</feature>
<feature type="turn" evidence="12">
    <location>
        <begin position="241"/>
        <end position="243"/>
    </location>
</feature>
<feature type="helix" evidence="12">
    <location>
        <begin position="247"/>
        <end position="249"/>
    </location>
</feature>
<feature type="strand" evidence="12">
    <location>
        <begin position="254"/>
        <end position="265"/>
    </location>
</feature>
<feature type="helix" evidence="12">
    <location>
        <begin position="266"/>
        <end position="268"/>
    </location>
</feature>
<feature type="strand" evidence="12">
    <location>
        <begin position="269"/>
        <end position="273"/>
    </location>
</feature>
<feature type="helix" evidence="12">
    <location>
        <begin position="277"/>
        <end position="315"/>
    </location>
</feature>
<feature type="helix" evidence="12">
    <location>
        <begin position="321"/>
        <end position="346"/>
    </location>
</feature>
<feature type="helix" evidence="12">
    <location>
        <begin position="360"/>
        <end position="385"/>
    </location>
</feature>
<feature type="helix" evidence="12">
    <location>
        <begin position="386"/>
        <end position="388"/>
    </location>
</feature>
<feature type="helix" evidence="12">
    <location>
        <begin position="395"/>
        <end position="399"/>
    </location>
</feature>
<feature type="turn" evidence="12">
    <location>
        <begin position="401"/>
        <end position="403"/>
    </location>
</feature>
<feature type="helix" evidence="12">
    <location>
        <begin position="404"/>
        <end position="410"/>
    </location>
</feature>
<feature type="strand" evidence="12">
    <location>
        <begin position="414"/>
        <end position="416"/>
    </location>
</feature>
<feature type="helix" evidence="12">
    <location>
        <begin position="420"/>
        <end position="432"/>
    </location>
</feature>
<feature type="helix" evidence="12">
    <location>
        <begin position="435"/>
        <end position="443"/>
    </location>
</feature>
<feature type="turn" evidence="12">
    <location>
        <begin position="444"/>
        <end position="446"/>
    </location>
</feature>
<feature type="strand" evidence="12">
    <location>
        <begin position="447"/>
        <end position="449"/>
    </location>
</feature>
<feature type="helix" evidence="12">
    <location>
        <begin position="451"/>
        <end position="458"/>
    </location>
</feature>
<feature type="helix" evidence="12">
    <location>
        <begin position="462"/>
        <end position="464"/>
    </location>
</feature>
<feature type="strand" evidence="12">
    <location>
        <begin position="465"/>
        <end position="469"/>
    </location>
</feature>
<feature type="helix" evidence="12">
    <location>
        <begin position="472"/>
        <end position="478"/>
    </location>
</feature>
<dbReference type="EC" id="1.14.14.173" evidence="3 9"/>
<dbReference type="EMBL" id="AF498371">
    <property type="protein sequence ID" value="AAM55214.1"/>
    <property type="molecule type" value="Genomic_DNA"/>
</dbReference>
<dbReference type="EMBL" id="CP000090">
    <property type="protein sequence ID" value="AAZ60951.1"/>
    <property type="molecule type" value="Genomic_DNA"/>
</dbReference>
<dbReference type="PDB" id="4G5E">
    <property type="method" value="X-ray"/>
    <property type="resolution" value="2.50 A"/>
    <property type="chains" value="A/B/C/D=1-517"/>
</dbReference>
<dbReference type="PDBsum" id="4G5E"/>
<dbReference type="SMR" id="Q471I2"/>
<dbReference type="STRING" id="264198.Reut_A1585"/>
<dbReference type="KEGG" id="reu:Reut_A1585"/>
<dbReference type="eggNOG" id="COG2368">
    <property type="taxonomic scope" value="Bacteria"/>
</dbReference>
<dbReference type="HOGENOM" id="CLU_023920_2_1_4"/>
<dbReference type="OrthoDB" id="7233724at2"/>
<dbReference type="BioCyc" id="MetaCyc:REUT_A1585-MONOMER"/>
<dbReference type="BRENDA" id="1.14.14.173">
    <property type="organism ID" value="231"/>
</dbReference>
<dbReference type="EvolutionaryTrace" id="Q471I2"/>
<dbReference type="GO" id="GO:0004497">
    <property type="term" value="F:monooxygenase activity"/>
    <property type="evidence" value="ECO:0007669"/>
    <property type="project" value="UniProtKB-KW"/>
</dbReference>
<dbReference type="GO" id="GO:0016627">
    <property type="term" value="F:oxidoreductase activity, acting on the CH-CH group of donors"/>
    <property type="evidence" value="ECO:0007669"/>
    <property type="project" value="InterPro"/>
</dbReference>
<dbReference type="GO" id="GO:0009056">
    <property type="term" value="P:catabolic process"/>
    <property type="evidence" value="ECO:0007669"/>
    <property type="project" value="UniProtKB-KW"/>
</dbReference>
<dbReference type="Gene3D" id="1.10.3140.10">
    <property type="entry name" value="4-hydroxybutyryl-coa dehydratase, domain 1"/>
    <property type="match status" value="1"/>
</dbReference>
<dbReference type="Gene3D" id="2.40.110.10">
    <property type="entry name" value="Butyryl-CoA Dehydrogenase, subunit A, domain 2"/>
    <property type="match status" value="1"/>
</dbReference>
<dbReference type="Gene3D" id="1.20.140.10">
    <property type="entry name" value="Butyryl-CoA Dehydrogenase, subunit A, domain 3"/>
    <property type="match status" value="1"/>
</dbReference>
<dbReference type="InterPro" id="IPR046373">
    <property type="entry name" value="Acyl-CoA_Oxase/DH_mid-dom_sf"/>
</dbReference>
<dbReference type="InterPro" id="IPR036250">
    <property type="entry name" value="AcylCo_DH-like_C"/>
</dbReference>
<dbReference type="InterPro" id="IPR009100">
    <property type="entry name" value="AcylCoA_DH/oxidase_NM_dom_sf"/>
</dbReference>
<dbReference type="InterPro" id="IPR004925">
    <property type="entry name" value="HpaB/PvcC/4-BUDH"/>
</dbReference>
<dbReference type="InterPro" id="IPR024719">
    <property type="entry name" value="HpaB/PvcC/4-BUDH_C"/>
</dbReference>
<dbReference type="InterPro" id="IPR024674">
    <property type="entry name" value="HpaB/PvcC/4-BUDH_N"/>
</dbReference>
<dbReference type="PANTHER" id="PTHR36117">
    <property type="entry name" value="4-HYDROXYPHENYLACETATE 3-MONOOXYGENASE-RELATED"/>
    <property type="match status" value="1"/>
</dbReference>
<dbReference type="PANTHER" id="PTHR36117:SF3">
    <property type="entry name" value="4-HYDROXYPHENYLACETATE 3-MONOOXYGENASE-RELATED"/>
    <property type="match status" value="1"/>
</dbReference>
<dbReference type="Pfam" id="PF03241">
    <property type="entry name" value="HpaB"/>
    <property type="match status" value="1"/>
</dbReference>
<dbReference type="Pfam" id="PF11794">
    <property type="entry name" value="HpaB_N"/>
    <property type="match status" value="1"/>
</dbReference>
<dbReference type="SUPFAM" id="SSF47203">
    <property type="entry name" value="Acyl-CoA dehydrogenase C-terminal domain-like"/>
    <property type="match status" value="1"/>
</dbReference>
<dbReference type="SUPFAM" id="SSF56645">
    <property type="entry name" value="Acyl-CoA dehydrogenase NM domain-like"/>
    <property type="match status" value="1"/>
</dbReference>
<proteinExistence type="evidence at protein level"/>